<name>PURQ_LIMRD</name>
<sequence length="226" mass="24732">MKIAVVVFPGSNCDVDLYEALHSVCHADVEYVSHRQKSLAGFDAVMLPGGFSYGDYLRAGAIARFTNIMPAIIKMANEGKPVFGTCNGFQILTEAGLLPGGLKRNDSQRFVCKTVPLEVVNSHTLFTSHYQDHERIALPIAHADGSYYADEKTLDELEANNQVVFRYATENPNGSLHNIAGITNKHGNVLGMMPHPERAVETILGSTDGLRLFESLLENGRIKVEA</sequence>
<gene>
    <name evidence="1" type="primary">purQ</name>
    <name type="ordered locus">Lreu_0139</name>
</gene>
<protein>
    <recommendedName>
        <fullName evidence="1">Phosphoribosylformylglycinamidine synthase subunit PurQ</fullName>
        <shortName evidence="1">FGAM synthase</shortName>
        <ecNumber evidence="1">6.3.5.3</ecNumber>
    </recommendedName>
    <alternativeName>
        <fullName evidence="1">Formylglycinamide ribonucleotide amidotransferase subunit I</fullName>
        <shortName evidence="1">FGAR amidotransferase I</shortName>
        <shortName evidence="1">FGAR-AT I</shortName>
    </alternativeName>
    <alternativeName>
        <fullName evidence="1">Glutaminase PurQ</fullName>
        <ecNumber evidence="1">3.5.1.2</ecNumber>
    </alternativeName>
    <alternativeName>
        <fullName evidence="1">Phosphoribosylformylglycinamidine synthase subunit I</fullName>
    </alternativeName>
</protein>
<evidence type="ECO:0000255" key="1">
    <source>
        <dbReference type="HAMAP-Rule" id="MF_00421"/>
    </source>
</evidence>
<dbReference type="EC" id="6.3.5.3" evidence="1"/>
<dbReference type="EC" id="3.5.1.2" evidence="1"/>
<dbReference type="EMBL" id="CP000705">
    <property type="protein sequence ID" value="ABQ82411.1"/>
    <property type="molecule type" value="Genomic_DNA"/>
</dbReference>
<dbReference type="RefSeq" id="WP_003669722.1">
    <property type="nucleotide sequence ID" value="NC_009513.1"/>
</dbReference>
<dbReference type="SMR" id="A5VHT7"/>
<dbReference type="STRING" id="557436.Lreu_0139"/>
<dbReference type="KEGG" id="lre:Lreu_0139"/>
<dbReference type="eggNOG" id="COG0047">
    <property type="taxonomic scope" value="Bacteria"/>
</dbReference>
<dbReference type="HOGENOM" id="CLU_001031_3_1_9"/>
<dbReference type="OMA" id="SNCDHDC"/>
<dbReference type="UniPathway" id="UPA00074">
    <property type="reaction ID" value="UER00128"/>
</dbReference>
<dbReference type="Proteomes" id="UP000001991">
    <property type="component" value="Chromosome"/>
</dbReference>
<dbReference type="GO" id="GO:0005737">
    <property type="term" value="C:cytoplasm"/>
    <property type="evidence" value="ECO:0007669"/>
    <property type="project" value="UniProtKB-SubCell"/>
</dbReference>
<dbReference type="GO" id="GO:0005524">
    <property type="term" value="F:ATP binding"/>
    <property type="evidence" value="ECO:0007669"/>
    <property type="project" value="UniProtKB-KW"/>
</dbReference>
<dbReference type="GO" id="GO:0004359">
    <property type="term" value="F:glutaminase activity"/>
    <property type="evidence" value="ECO:0007669"/>
    <property type="project" value="UniProtKB-EC"/>
</dbReference>
<dbReference type="GO" id="GO:0004642">
    <property type="term" value="F:phosphoribosylformylglycinamidine synthase activity"/>
    <property type="evidence" value="ECO:0007669"/>
    <property type="project" value="UniProtKB-UniRule"/>
</dbReference>
<dbReference type="GO" id="GO:0006189">
    <property type="term" value="P:'de novo' IMP biosynthetic process"/>
    <property type="evidence" value="ECO:0007669"/>
    <property type="project" value="UniProtKB-UniRule"/>
</dbReference>
<dbReference type="CDD" id="cd01740">
    <property type="entry name" value="GATase1_FGAR_AT"/>
    <property type="match status" value="1"/>
</dbReference>
<dbReference type="FunFam" id="3.40.50.880:FF:000019">
    <property type="entry name" value="Phosphoribosylformylglycinamidine synthase subunit PurQ"/>
    <property type="match status" value="1"/>
</dbReference>
<dbReference type="Gene3D" id="3.40.50.880">
    <property type="match status" value="1"/>
</dbReference>
<dbReference type="HAMAP" id="MF_00421">
    <property type="entry name" value="PurQ"/>
    <property type="match status" value="1"/>
</dbReference>
<dbReference type="InterPro" id="IPR029062">
    <property type="entry name" value="Class_I_gatase-like"/>
</dbReference>
<dbReference type="InterPro" id="IPR010075">
    <property type="entry name" value="PRibForGlyAmidine_synth_PurQ"/>
</dbReference>
<dbReference type="NCBIfam" id="TIGR01737">
    <property type="entry name" value="FGAM_synth_I"/>
    <property type="match status" value="1"/>
</dbReference>
<dbReference type="NCBIfam" id="NF002957">
    <property type="entry name" value="PRK03619.1"/>
    <property type="match status" value="1"/>
</dbReference>
<dbReference type="PANTHER" id="PTHR47552">
    <property type="entry name" value="PHOSPHORIBOSYLFORMYLGLYCINAMIDINE SYNTHASE SUBUNIT PURQ"/>
    <property type="match status" value="1"/>
</dbReference>
<dbReference type="PANTHER" id="PTHR47552:SF1">
    <property type="entry name" value="PHOSPHORIBOSYLFORMYLGLYCINAMIDINE SYNTHASE SUBUNIT PURQ"/>
    <property type="match status" value="1"/>
</dbReference>
<dbReference type="Pfam" id="PF13507">
    <property type="entry name" value="GATase_5"/>
    <property type="match status" value="1"/>
</dbReference>
<dbReference type="PIRSF" id="PIRSF001586">
    <property type="entry name" value="FGAM_synth_I"/>
    <property type="match status" value="1"/>
</dbReference>
<dbReference type="SMART" id="SM01211">
    <property type="entry name" value="GATase_5"/>
    <property type="match status" value="1"/>
</dbReference>
<dbReference type="SUPFAM" id="SSF52317">
    <property type="entry name" value="Class I glutamine amidotransferase-like"/>
    <property type="match status" value="1"/>
</dbReference>
<dbReference type="PROSITE" id="PS51273">
    <property type="entry name" value="GATASE_TYPE_1"/>
    <property type="match status" value="1"/>
</dbReference>
<accession>A5VHT7</accession>
<organism>
    <name type="scientific">Limosilactobacillus reuteri (strain DSM 20016)</name>
    <name type="common">Lactobacillus reuteri</name>
    <dbReference type="NCBI Taxonomy" id="557436"/>
    <lineage>
        <taxon>Bacteria</taxon>
        <taxon>Bacillati</taxon>
        <taxon>Bacillota</taxon>
        <taxon>Bacilli</taxon>
        <taxon>Lactobacillales</taxon>
        <taxon>Lactobacillaceae</taxon>
        <taxon>Limosilactobacillus</taxon>
    </lineage>
</organism>
<feature type="chain" id="PRO_1000124123" description="Phosphoribosylformylglycinamidine synthase subunit PurQ">
    <location>
        <begin position="1"/>
        <end position="226"/>
    </location>
</feature>
<feature type="domain" description="Glutamine amidotransferase type-1" evidence="1">
    <location>
        <begin position="2"/>
        <end position="226"/>
    </location>
</feature>
<feature type="active site" description="Nucleophile" evidence="1">
    <location>
        <position position="86"/>
    </location>
</feature>
<feature type="active site" evidence="1">
    <location>
        <position position="195"/>
    </location>
</feature>
<feature type="active site" evidence="1">
    <location>
        <position position="197"/>
    </location>
</feature>
<proteinExistence type="inferred from homology"/>
<comment type="function">
    <text evidence="1">Part of the phosphoribosylformylglycinamidine synthase complex involved in the purines biosynthetic pathway. Catalyzes the ATP-dependent conversion of formylglycinamide ribonucleotide (FGAR) and glutamine to yield formylglycinamidine ribonucleotide (FGAM) and glutamate. The FGAM synthase complex is composed of three subunits. PurQ produces an ammonia molecule by converting glutamine to glutamate. PurL transfers the ammonia molecule to FGAR to form FGAM in an ATP-dependent manner. PurS interacts with PurQ and PurL and is thought to assist in the transfer of the ammonia molecule from PurQ to PurL.</text>
</comment>
<comment type="catalytic activity">
    <reaction evidence="1">
        <text>N(2)-formyl-N(1)-(5-phospho-beta-D-ribosyl)glycinamide + L-glutamine + ATP + H2O = 2-formamido-N(1)-(5-O-phospho-beta-D-ribosyl)acetamidine + L-glutamate + ADP + phosphate + H(+)</text>
        <dbReference type="Rhea" id="RHEA:17129"/>
        <dbReference type="ChEBI" id="CHEBI:15377"/>
        <dbReference type="ChEBI" id="CHEBI:15378"/>
        <dbReference type="ChEBI" id="CHEBI:29985"/>
        <dbReference type="ChEBI" id="CHEBI:30616"/>
        <dbReference type="ChEBI" id="CHEBI:43474"/>
        <dbReference type="ChEBI" id="CHEBI:58359"/>
        <dbReference type="ChEBI" id="CHEBI:147286"/>
        <dbReference type="ChEBI" id="CHEBI:147287"/>
        <dbReference type="ChEBI" id="CHEBI:456216"/>
        <dbReference type="EC" id="6.3.5.3"/>
    </reaction>
</comment>
<comment type="catalytic activity">
    <reaction evidence="1">
        <text>L-glutamine + H2O = L-glutamate + NH4(+)</text>
        <dbReference type="Rhea" id="RHEA:15889"/>
        <dbReference type="ChEBI" id="CHEBI:15377"/>
        <dbReference type="ChEBI" id="CHEBI:28938"/>
        <dbReference type="ChEBI" id="CHEBI:29985"/>
        <dbReference type="ChEBI" id="CHEBI:58359"/>
        <dbReference type="EC" id="3.5.1.2"/>
    </reaction>
</comment>
<comment type="pathway">
    <text evidence="1">Purine metabolism; IMP biosynthesis via de novo pathway; 5-amino-1-(5-phospho-D-ribosyl)imidazole from N(2)-formyl-N(1)-(5-phospho-D-ribosyl)glycinamide: step 1/2.</text>
</comment>
<comment type="subunit">
    <text evidence="1">Part of the FGAM synthase complex composed of 1 PurL, 1 PurQ and 2 PurS subunits.</text>
</comment>
<comment type="subcellular location">
    <subcellularLocation>
        <location evidence="1">Cytoplasm</location>
    </subcellularLocation>
</comment>
<keyword id="KW-0067">ATP-binding</keyword>
<keyword id="KW-0963">Cytoplasm</keyword>
<keyword id="KW-0315">Glutamine amidotransferase</keyword>
<keyword id="KW-0378">Hydrolase</keyword>
<keyword id="KW-0436">Ligase</keyword>
<keyword id="KW-0547">Nucleotide-binding</keyword>
<keyword id="KW-0658">Purine biosynthesis</keyword>
<keyword id="KW-1185">Reference proteome</keyword>
<reference key="1">
    <citation type="journal article" date="2011" name="PLoS Genet.">
        <title>The evolution of host specialization in the vertebrate gut symbiont Lactobacillus reuteri.</title>
        <authorList>
            <person name="Frese S.A."/>
            <person name="Benson A.K."/>
            <person name="Tannock G.W."/>
            <person name="Loach D.M."/>
            <person name="Kim J."/>
            <person name="Zhang M."/>
            <person name="Oh P.L."/>
            <person name="Heng N.C."/>
            <person name="Patil P.B."/>
            <person name="Juge N."/>
            <person name="Mackenzie D.A."/>
            <person name="Pearson B.M."/>
            <person name="Lapidus A."/>
            <person name="Dalin E."/>
            <person name="Tice H."/>
            <person name="Goltsman E."/>
            <person name="Land M."/>
            <person name="Hauser L."/>
            <person name="Ivanova N."/>
            <person name="Kyrpides N.C."/>
            <person name="Walter J."/>
        </authorList>
    </citation>
    <scope>NUCLEOTIDE SEQUENCE [LARGE SCALE GENOMIC DNA]</scope>
    <source>
        <strain>DSM 20016</strain>
    </source>
</reference>